<name>RBM19_HUMAN</name>
<feature type="chain" id="PRO_0000081781" description="Probable RNA-binding protein 19">
    <location>
        <begin position="1"/>
        <end position="960"/>
    </location>
</feature>
<feature type="domain" description="RRM 1" evidence="2">
    <location>
        <begin position="2"/>
        <end position="79"/>
    </location>
</feature>
<feature type="domain" description="RRM 2" evidence="2">
    <location>
        <begin position="294"/>
        <end position="369"/>
    </location>
</feature>
<feature type="domain" description="RRM 3" evidence="2">
    <location>
        <begin position="402"/>
        <end position="480"/>
    </location>
</feature>
<feature type="domain" description="RRM 4" evidence="2">
    <location>
        <begin position="587"/>
        <end position="659"/>
    </location>
</feature>
<feature type="domain" description="RRM 5" evidence="2">
    <location>
        <begin position="730"/>
        <end position="811"/>
    </location>
</feature>
<feature type="domain" description="RRM 6" evidence="2">
    <location>
        <begin position="832"/>
        <end position="912"/>
    </location>
</feature>
<feature type="region of interest" description="Disordered" evidence="3">
    <location>
        <begin position="85"/>
        <end position="119"/>
    </location>
</feature>
<feature type="region of interest" description="Disordered" evidence="3">
    <location>
        <begin position="149"/>
        <end position="294"/>
    </location>
</feature>
<feature type="region of interest" description="Disordered" evidence="3">
    <location>
        <begin position="491"/>
        <end position="513"/>
    </location>
</feature>
<feature type="region of interest" description="Disordered" evidence="3">
    <location>
        <begin position="667"/>
        <end position="729"/>
    </location>
</feature>
<feature type="compositionally biased region" description="Acidic residues" evidence="3">
    <location>
        <begin position="176"/>
        <end position="194"/>
    </location>
</feature>
<feature type="compositionally biased region" description="Basic and acidic residues" evidence="3">
    <location>
        <begin position="273"/>
        <end position="286"/>
    </location>
</feature>
<feature type="compositionally biased region" description="Acidic residues" evidence="3">
    <location>
        <begin position="689"/>
        <end position="706"/>
    </location>
</feature>
<feature type="compositionally biased region" description="Acidic residues" evidence="3">
    <location>
        <begin position="714"/>
        <end position="726"/>
    </location>
</feature>
<feature type="modified residue" description="Phosphoserine" evidence="11 13">
    <location>
        <position position="174"/>
    </location>
</feature>
<feature type="modified residue" description="Phosphoserine" evidence="11 13">
    <location>
        <position position="176"/>
    </location>
</feature>
<feature type="modified residue" description="Phosphoserine" evidence="11 13">
    <location>
        <position position="180"/>
    </location>
</feature>
<feature type="modified residue" description="Phosphoserine" evidence="13">
    <location>
        <position position="936"/>
    </location>
</feature>
<feature type="modified residue" description="Phosphoserine" evidence="12 13">
    <location>
        <position position="949"/>
    </location>
</feature>
<feature type="modified residue" description="Phosphoserine" evidence="12 13">
    <location>
        <position position="951"/>
    </location>
</feature>
<feature type="cross-link" description="Glycyl lysine isopeptide (Lys-Gly) (interchain with G-Cter in SUMO2)" evidence="14">
    <location>
        <position position="481"/>
    </location>
</feature>
<feature type="sequence variant" id="VAR_059822" description="In dbSNP:rs7299217." evidence="4 6 7 9">
    <original>Q</original>
    <variation>E</variation>
    <location>
        <position position="602"/>
    </location>
</feature>
<feature type="sequence variant" id="VAR_023114" description="In dbSNP:rs2290789." evidence="7 9">
    <original>H</original>
    <variation>R</variation>
    <location>
        <position position="609"/>
    </location>
</feature>
<feature type="sequence variant" id="VAR_023115" description="In dbSNP:rs2290788." evidence="7 9">
    <original>I</original>
    <variation>T</variation>
    <location>
        <position position="623"/>
    </location>
</feature>
<feature type="sequence variant" id="VAR_023116" description="In dbSNP:rs2290787." evidence="7 9">
    <original>T</original>
    <variation>A</variation>
    <location>
        <position position="665"/>
    </location>
</feature>
<feature type="sequence variant" id="VAR_057246" description="In dbSNP:rs16943379.">
    <original>R</original>
    <variation>G</variation>
    <location>
        <position position="821"/>
    </location>
</feature>
<feature type="sequence variant" id="VAR_023117" description="In dbSNP:rs2075387." evidence="4">
    <original>R</original>
    <variation>Q</variation>
    <location>
        <position position="921"/>
    </location>
</feature>
<feature type="sequence conflict" description="In Ref. 1; BAA31657." evidence="10" ref="1">
    <original>Q</original>
    <variation>R</variation>
    <location>
        <position position="141"/>
    </location>
</feature>
<feature type="sequence conflict" description="In Ref. 1; BAA31657 and 6; AAH06137/AAH04289." evidence="10" ref="1 6">
    <original>K</original>
    <variation>R</variation>
    <location>
        <position position="259"/>
    </location>
</feature>
<feature type="strand" evidence="15">
    <location>
        <begin position="295"/>
        <end position="299"/>
    </location>
</feature>
<feature type="helix" evidence="15">
    <location>
        <begin position="307"/>
        <end position="314"/>
    </location>
</feature>
<feature type="strand" evidence="15">
    <location>
        <begin position="320"/>
        <end position="326"/>
    </location>
</feature>
<feature type="strand" evidence="15">
    <location>
        <begin position="332"/>
        <end position="339"/>
    </location>
</feature>
<feature type="helix" evidence="15">
    <location>
        <begin position="343"/>
        <end position="351"/>
    </location>
</feature>
<feature type="strand" evidence="15">
    <location>
        <begin position="354"/>
        <end position="357"/>
    </location>
</feature>
<feature type="strand" evidence="15">
    <location>
        <begin position="360"/>
        <end position="368"/>
    </location>
</feature>
<sequence length="960" mass="107332">MSRLIVKNLPNGMKEERFRQLFAAFGTLTDCSLKFTKDGKFRKFGFIGFKSEEEAQKAQKHFNKSFIDTSRITVEFCKSFGDPAKPRAWSKHAQKPSQPKQPPKDSTTPEIKKDEKKKKVAGQLEKLKEDTEFQEFLSVHQRRAQAATWANDGLDAEPSKGKSKPASDYLNFDSDSGQESEEEGAGEDLEEEASLEPKAAVQKELSDMDYLKSKMVKAGSSSSSEEEESEDEAVHCDEGSEAEEEDSSATPVLQERDSKGAGQEQGMPAGKKRPPEARAETEKPANQKEPTTCHTVKLRGAPFNVTEKNVMEFLAPLKPVAIRIVRNAHGNKTGYIFVDFSNEEEVKQALKCNREYMGGRYIEVFREKNVPTTKGAPKNTTKSWQGRILGENEEEEDLAESGRLFVRNLPYTSTEEDLEKLFSKYGPLSELHYPIDSLTKKPKGFAFITFMFPEHAVKAYSEVDGQVFQGRMLHVLPSTIKKEASEDASALGSSSYKKKKEAQDKANSASSHNWNTLFMGPNAVADAIAQKYNATKSQVFDHETKGSVAVRVALGETQLVQEVRRFLIDNGVSLDSFSQAAAERSKTVILVKNLPAGTLAAQLQETFGHFGSLGRVLLPEGGITAIVEFLEPLEARKAFRHLAYSKFHHVPLYLEWAPVGVFSSTAPQKKKLQDTPSEPMEKDPAEPETVPDGETPEDENPTEEGADNSSAKMEEEEEEEEEEEESLPGCTLFIKNLNFDTTEEKLKEVFSKVGTVKSCSISKKKNKAGVLLSMGFGFVEYRKPEQAQKALKQLQGHVVDGHKLEVRISERATKPAVTLARKKQVPRKQTTSKILVRNIPFQAHSREIRELFSTFGELKTVRLPKKMTGTGTHRGFGFVDFLTKQDAKRAFNALCHSTHLYGRRLVLEWADSEVTLQALRRKTAAHFHEPPKKKRSVVLDEILEQLEGSDSDSEEQTLQL</sequence>
<accession>Q9Y4C8</accession>
<accession>A8K5X9</accession>
<accession>Q9BPY6</accession>
<accession>Q9UFN5</accession>
<comment type="function">
    <text evidence="1">Plays a role in embryo pre-implantation development.</text>
</comment>
<comment type="subcellular location">
    <subcellularLocation>
        <location evidence="5 8">Nucleus</location>
        <location evidence="5 8">Nucleolus</location>
    </subcellularLocation>
    <subcellularLocation>
        <location evidence="1">Nucleus</location>
        <location evidence="1">Nucleoplasm</location>
    </subcellularLocation>
    <subcellularLocation>
        <location evidence="1">Cytoplasm</location>
    </subcellularLocation>
    <subcellularLocation>
        <location evidence="1">Chromosome</location>
    </subcellularLocation>
    <text evidence="1">In discrete foci distributed throughout the cytoplasm and nucleoplasm during the 4 to 8 cell stages and the morula stage, but not in the periphery of the nucleolar precursor body (NPB). During blastocyst development, becomes increasingly localized to the nucleolus and less to the cytoplasm. At the late blastocyst stage, localized predominantly in the nucleolus. Localized in the nucleolus during interphase and to the perichromosomal sheath during mitosis. Does not colocalize in the cytoplasm with GW182 in P-bodies. May translocate to the nucleolus upon early embryonic development (By similarity). Colocalizes with NPM1 during interphase. By late prophase, metaphase, anaphase and telophase, associates with the chromosome periphery. By telophase localizes to NPB.</text>
</comment>
<comment type="tissue specificity">
    <text evidence="8">Expressed in the crypts of Lieberkuhn of the intestine and in intestinal neoplasia (at protein level).</text>
</comment>
<comment type="similarity">
    <text evidence="10">Belongs to the RRM MRD1 family.</text>
</comment>
<comment type="sequence caution" evidence="10">
    <conflict type="erroneous initiation">
        <sequence resource="EMBL-CDS" id="BAA31657"/>
    </conflict>
    <text>Extended N-terminus.</text>
</comment>
<proteinExistence type="evidence at protein level"/>
<organism>
    <name type="scientific">Homo sapiens</name>
    <name type="common">Human</name>
    <dbReference type="NCBI Taxonomy" id="9606"/>
    <lineage>
        <taxon>Eukaryota</taxon>
        <taxon>Metazoa</taxon>
        <taxon>Chordata</taxon>
        <taxon>Craniata</taxon>
        <taxon>Vertebrata</taxon>
        <taxon>Euteleostomi</taxon>
        <taxon>Mammalia</taxon>
        <taxon>Eutheria</taxon>
        <taxon>Euarchontoglires</taxon>
        <taxon>Primates</taxon>
        <taxon>Haplorrhini</taxon>
        <taxon>Catarrhini</taxon>
        <taxon>Hominidae</taxon>
        <taxon>Homo</taxon>
    </lineage>
</organism>
<protein>
    <recommendedName>
        <fullName>Probable RNA-binding protein 19</fullName>
    </recommendedName>
    <alternativeName>
        <fullName>RNA-binding motif protein 19</fullName>
    </alternativeName>
</protein>
<dbReference type="EMBL" id="AB014582">
    <property type="protein sequence ID" value="BAA31657.2"/>
    <property type="status" value="ALT_INIT"/>
    <property type="molecule type" value="mRNA"/>
</dbReference>
<dbReference type="EMBL" id="AL117547">
    <property type="protein sequence ID" value="CAB55987.1"/>
    <property type="molecule type" value="mRNA"/>
</dbReference>
<dbReference type="EMBL" id="AK291444">
    <property type="protein sequence ID" value="BAF84133.1"/>
    <property type="molecule type" value="mRNA"/>
</dbReference>
<dbReference type="EMBL" id="AK314606">
    <property type="protein sequence ID" value="BAG37176.1"/>
    <property type="molecule type" value="mRNA"/>
</dbReference>
<dbReference type="EMBL" id="AC009731">
    <property type="status" value="NOT_ANNOTATED_CDS"/>
    <property type="molecule type" value="Genomic_DNA"/>
</dbReference>
<dbReference type="EMBL" id="AC073863">
    <property type="status" value="NOT_ANNOTATED_CDS"/>
    <property type="molecule type" value="Genomic_DNA"/>
</dbReference>
<dbReference type="EMBL" id="AC090669">
    <property type="status" value="NOT_ANNOTATED_CDS"/>
    <property type="molecule type" value="Genomic_DNA"/>
</dbReference>
<dbReference type="EMBL" id="BC004289">
    <property type="protein sequence ID" value="AAH04289.1"/>
    <property type="molecule type" value="mRNA"/>
</dbReference>
<dbReference type="EMBL" id="BC006137">
    <property type="protein sequence ID" value="AAH06137.1"/>
    <property type="molecule type" value="mRNA"/>
</dbReference>
<dbReference type="CCDS" id="CCDS9172.1"/>
<dbReference type="PIR" id="T17297">
    <property type="entry name" value="T17297"/>
</dbReference>
<dbReference type="RefSeq" id="NP_001140170.1">
    <property type="nucleotide sequence ID" value="NM_001146698.2"/>
</dbReference>
<dbReference type="RefSeq" id="NP_001140171.1">
    <property type="nucleotide sequence ID" value="NM_001146699.2"/>
</dbReference>
<dbReference type="RefSeq" id="NP_057280.2">
    <property type="nucleotide sequence ID" value="NM_016196.4"/>
</dbReference>
<dbReference type="PDB" id="2DGW">
    <property type="method" value="NMR"/>
    <property type="chains" value="A=291-368"/>
</dbReference>
<dbReference type="PDBsum" id="2DGW"/>
<dbReference type="SMR" id="Q9Y4C8"/>
<dbReference type="BioGRID" id="115233">
    <property type="interactions" value="237"/>
</dbReference>
<dbReference type="FunCoup" id="Q9Y4C8">
    <property type="interactions" value="3673"/>
</dbReference>
<dbReference type="IntAct" id="Q9Y4C8">
    <property type="interactions" value="176"/>
</dbReference>
<dbReference type="MINT" id="Q9Y4C8"/>
<dbReference type="STRING" id="9606.ENSP00000442053"/>
<dbReference type="GlyGen" id="Q9Y4C8">
    <property type="glycosylation" value="2 sites, 1 N-linked glycan (1 site), 1 O-linked glycan (1 site)"/>
</dbReference>
<dbReference type="iPTMnet" id="Q9Y4C8"/>
<dbReference type="PhosphoSitePlus" id="Q9Y4C8"/>
<dbReference type="SwissPalm" id="Q9Y4C8"/>
<dbReference type="BioMuta" id="RBM19"/>
<dbReference type="DMDM" id="308153566"/>
<dbReference type="jPOST" id="Q9Y4C8"/>
<dbReference type="MassIVE" id="Q9Y4C8"/>
<dbReference type="PaxDb" id="9606-ENSP00000442053"/>
<dbReference type="PeptideAtlas" id="Q9Y4C8"/>
<dbReference type="ProteomicsDB" id="86163"/>
<dbReference type="Pumba" id="Q9Y4C8"/>
<dbReference type="Antibodypedia" id="31281">
    <property type="antibodies" value="54 antibodies from 17 providers"/>
</dbReference>
<dbReference type="DNASU" id="9904"/>
<dbReference type="Ensembl" id="ENST00000261741.10">
    <property type="protein sequence ID" value="ENSP00000261741.5"/>
    <property type="gene ID" value="ENSG00000122965.11"/>
</dbReference>
<dbReference type="Ensembl" id="ENST00000392561.7">
    <property type="protein sequence ID" value="ENSP00000376344.3"/>
    <property type="gene ID" value="ENSG00000122965.11"/>
</dbReference>
<dbReference type="Ensembl" id="ENST00000545145.6">
    <property type="protein sequence ID" value="ENSP00000442053.2"/>
    <property type="gene ID" value="ENSG00000122965.11"/>
</dbReference>
<dbReference type="GeneID" id="9904"/>
<dbReference type="KEGG" id="hsa:9904"/>
<dbReference type="MANE-Select" id="ENST00000261741.10">
    <property type="protein sequence ID" value="ENSP00000261741.5"/>
    <property type="RefSeq nucleotide sequence ID" value="NM_016196.4"/>
    <property type="RefSeq protein sequence ID" value="NP_057280.2"/>
</dbReference>
<dbReference type="UCSC" id="uc001tvm.4">
    <property type="organism name" value="human"/>
</dbReference>
<dbReference type="AGR" id="HGNC:29098"/>
<dbReference type="CTD" id="9904"/>
<dbReference type="DisGeNET" id="9904"/>
<dbReference type="GeneCards" id="RBM19"/>
<dbReference type="HGNC" id="HGNC:29098">
    <property type="gene designation" value="RBM19"/>
</dbReference>
<dbReference type="HPA" id="ENSG00000122965">
    <property type="expression patterns" value="Low tissue specificity"/>
</dbReference>
<dbReference type="MIM" id="616444">
    <property type="type" value="gene"/>
</dbReference>
<dbReference type="neXtProt" id="NX_Q9Y4C8"/>
<dbReference type="OpenTargets" id="ENSG00000122965"/>
<dbReference type="PharmGKB" id="PA134886784"/>
<dbReference type="VEuPathDB" id="HostDB:ENSG00000122965"/>
<dbReference type="eggNOG" id="KOG0110">
    <property type="taxonomic scope" value="Eukaryota"/>
</dbReference>
<dbReference type="GeneTree" id="ENSGT00840000129953"/>
<dbReference type="HOGENOM" id="CLU_008479_1_0_1"/>
<dbReference type="InParanoid" id="Q9Y4C8"/>
<dbReference type="OMA" id="FNNTCIQ"/>
<dbReference type="OrthoDB" id="439639at2759"/>
<dbReference type="PAN-GO" id="Q9Y4C8">
    <property type="GO annotations" value="4 GO annotations based on evolutionary models"/>
</dbReference>
<dbReference type="PhylomeDB" id="Q9Y4C8"/>
<dbReference type="TreeFam" id="TF105725"/>
<dbReference type="PathwayCommons" id="Q9Y4C8"/>
<dbReference type="SignaLink" id="Q9Y4C8"/>
<dbReference type="BioGRID-ORCS" id="9904">
    <property type="hits" value="641 hits in 1162 CRISPR screens"/>
</dbReference>
<dbReference type="CD-CODE" id="232F8A39">
    <property type="entry name" value="P-body"/>
</dbReference>
<dbReference type="CD-CODE" id="91857CE7">
    <property type="entry name" value="Nucleolus"/>
</dbReference>
<dbReference type="ChiTaRS" id="RBM19">
    <property type="organism name" value="human"/>
</dbReference>
<dbReference type="EvolutionaryTrace" id="Q9Y4C8"/>
<dbReference type="GeneWiki" id="RBM19"/>
<dbReference type="GenomeRNAi" id="9904"/>
<dbReference type="Pharos" id="Q9Y4C8">
    <property type="development level" value="Tbio"/>
</dbReference>
<dbReference type="PRO" id="PR:Q9Y4C8"/>
<dbReference type="Proteomes" id="UP000005640">
    <property type="component" value="Chromosome 12"/>
</dbReference>
<dbReference type="RNAct" id="Q9Y4C8">
    <property type="molecule type" value="protein"/>
</dbReference>
<dbReference type="Bgee" id="ENSG00000122965">
    <property type="expression patterns" value="Expressed in sural nerve and 111 other cell types or tissues"/>
</dbReference>
<dbReference type="ExpressionAtlas" id="Q9Y4C8">
    <property type="expression patterns" value="baseline and differential"/>
</dbReference>
<dbReference type="GO" id="GO:0005694">
    <property type="term" value="C:chromosome"/>
    <property type="evidence" value="ECO:0007669"/>
    <property type="project" value="UniProtKB-SubCell"/>
</dbReference>
<dbReference type="GO" id="GO:0005737">
    <property type="term" value="C:cytoplasm"/>
    <property type="evidence" value="ECO:0000250"/>
    <property type="project" value="UniProtKB"/>
</dbReference>
<dbReference type="GO" id="GO:0016020">
    <property type="term" value="C:membrane"/>
    <property type="evidence" value="ECO:0007005"/>
    <property type="project" value="UniProtKB"/>
</dbReference>
<dbReference type="GO" id="GO:0016607">
    <property type="term" value="C:nuclear speck"/>
    <property type="evidence" value="ECO:0000318"/>
    <property type="project" value="GO_Central"/>
</dbReference>
<dbReference type="GO" id="GO:0005730">
    <property type="term" value="C:nucleolus"/>
    <property type="evidence" value="ECO:0000314"/>
    <property type="project" value="UniProtKB"/>
</dbReference>
<dbReference type="GO" id="GO:0005654">
    <property type="term" value="C:nucleoplasm"/>
    <property type="evidence" value="ECO:0000250"/>
    <property type="project" value="UniProtKB"/>
</dbReference>
<dbReference type="GO" id="GO:0003723">
    <property type="term" value="F:RNA binding"/>
    <property type="evidence" value="ECO:0007005"/>
    <property type="project" value="UniProtKB"/>
</dbReference>
<dbReference type="GO" id="GO:0040019">
    <property type="term" value="P:positive regulation of embryonic development"/>
    <property type="evidence" value="ECO:0000250"/>
    <property type="project" value="UniProtKB"/>
</dbReference>
<dbReference type="CDD" id="cd12564">
    <property type="entry name" value="RRM1_RBM19"/>
    <property type="match status" value="1"/>
</dbReference>
<dbReference type="CDD" id="cd12502">
    <property type="entry name" value="RRM2_RMB19"/>
    <property type="match status" value="1"/>
</dbReference>
<dbReference type="CDD" id="cd12567">
    <property type="entry name" value="RRM3_RBM19"/>
    <property type="match status" value="1"/>
</dbReference>
<dbReference type="CDD" id="cd12569">
    <property type="entry name" value="RRM4_RBM19"/>
    <property type="match status" value="1"/>
</dbReference>
<dbReference type="CDD" id="cd12318">
    <property type="entry name" value="RRM5_RBM19_like"/>
    <property type="match status" value="1"/>
</dbReference>
<dbReference type="CDD" id="cd12571">
    <property type="entry name" value="RRM6_RBM19"/>
    <property type="match status" value="1"/>
</dbReference>
<dbReference type="FunFam" id="3.30.70.330:FF:000240">
    <property type="entry name" value="RNA binding motif protein 19"/>
    <property type="match status" value="1"/>
</dbReference>
<dbReference type="FunFam" id="3.30.70.330:FF:000277">
    <property type="entry name" value="RNA binding motif protein 19"/>
    <property type="match status" value="1"/>
</dbReference>
<dbReference type="FunFam" id="3.30.70.330:FF:000296">
    <property type="entry name" value="RNA binding motif protein 19"/>
    <property type="match status" value="1"/>
</dbReference>
<dbReference type="FunFam" id="3.30.70.330:FF:000297">
    <property type="entry name" value="RNA binding motif protein 19"/>
    <property type="match status" value="1"/>
</dbReference>
<dbReference type="FunFam" id="3.30.70.330:FF:000387">
    <property type="entry name" value="RNA binding motif protein 19"/>
    <property type="match status" value="1"/>
</dbReference>
<dbReference type="FunFam" id="3.30.70.330:FF:000389">
    <property type="entry name" value="RNA binding motif protein 19"/>
    <property type="match status" value="1"/>
</dbReference>
<dbReference type="Gene3D" id="3.30.70.330">
    <property type="match status" value="6"/>
</dbReference>
<dbReference type="InterPro" id="IPR012677">
    <property type="entry name" value="Nucleotide-bd_a/b_plait_sf"/>
</dbReference>
<dbReference type="InterPro" id="IPR035979">
    <property type="entry name" value="RBD_domain_sf"/>
</dbReference>
<dbReference type="InterPro" id="IPR034419">
    <property type="entry name" value="RBM19_RRM3"/>
</dbReference>
<dbReference type="InterPro" id="IPR034420">
    <property type="entry name" value="RBM19_RRM4"/>
</dbReference>
<dbReference type="InterPro" id="IPR034423">
    <property type="entry name" value="RBM19_RRM5"/>
</dbReference>
<dbReference type="InterPro" id="IPR034421">
    <property type="entry name" value="RBM19_RRM6"/>
</dbReference>
<dbReference type="InterPro" id="IPR034418">
    <property type="entry name" value="RMB19_RRM1"/>
</dbReference>
<dbReference type="InterPro" id="IPR034417">
    <property type="entry name" value="RMB19_RRM2"/>
</dbReference>
<dbReference type="InterPro" id="IPR000504">
    <property type="entry name" value="RRM_dom"/>
</dbReference>
<dbReference type="InterPro" id="IPR003954">
    <property type="entry name" value="RRM_dom_euk"/>
</dbReference>
<dbReference type="InterPro" id="IPR051945">
    <property type="entry name" value="RRM_MRD1_RNA_proc_ribogen"/>
</dbReference>
<dbReference type="PANTHER" id="PTHR48039">
    <property type="entry name" value="RNA-BINDING MOTIF PROTEIN 14B"/>
    <property type="match status" value="1"/>
</dbReference>
<dbReference type="PANTHER" id="PTHR48039:SF5">
    <property type="entry name" value="RNA-BINDING PROTEIN 28"/>
    <property type="match status" value="1"/>
</dbReference>
<dbReference type="Pfam" id="PF00076">
    <property type="entry name" value="RRM_1"/>
    <property type="match status" value="6"/>
</dbReference>
<dbReference type="SMART" id="SM00360">
    <property type="entry name" value="RRM"/>
    <property type="match status" value="6"/>
</dbReference>
<dbReference type="SMART" id="SM00361">
    <property type="entry name" value="RRM_1"/>
    <property type="match status" value="2"/>
</dbReference>
<dbReference type="SUPFAM" id="SSF54928">
    <property type="entry name" value="RNA-binding domain, RBD"/>
    <property type="match status" value="5"/>
</dbReference>
<dbReference type="PROSITE" id="PS50102">
    <property type="entry name" value="RRM"/>
    <property type="match status" value="6"/>
</dbReference>
<reference key="1">
    <citation type="journal article" date="1998" name="DNA Res.">
        <title>Prediction of the coding sequences of unidentified human genes. X. The complete sequences of 100 new cDNA clones from brain which can code for large proteins in vitro.</title>
        <authorList>
            <person name="Ishikawa K."/>
            <person name="Nagase T."/>
            <person name="Suyama M."/>
            <person name="Miyajima N."/>
            <person name="Tanaka A."/>
            <person name="Kotani H."/>
            <person name="Nomura N."/>
            <person name="Ohara O."/>
        </authorList>
    </citation>
    <scope>NUCLEOTIDE SEQUENCE [LARGE SCALE MRNA]</scope>
    <scope>VARIANTS GLU-602; ARG-609; THR-623 AND ALA-665</scope>
    <source>
        <tissue>Brain</tissue>
    </source>
</reference>
<reference key="2">
    <citation type="submission" date="2005-04" db="EMBL/GenBank/DDBJ databases">
        <authorList>
            <person name="Ohara O."/>
            <person name="Suyama M."/>
            <person name="Nagase T."/>
            <person name="Ishikawa K."/>
        </authorList>
    </citation>
    <scope>SEQUENCE REVISION TO N-TERMINUS</scope>
</reference>
<reference key="3">
    <citation type="journal article" date="2001" name="Genome Res.">
        <title>Towards a catalog of human genes and proteins: sequencing and analysis of 500 novel complete protein coding human cDNAs.</title>
        <authorList>
            <person name="Wiemann S."/>
            <person name="Weil B."/>
            <person name="Wellenreuther R."/>
            <person name="Gassenhuber J."/>
            <person name="Glassl S."/>
            <person name="Ansorge W."/>
            <person name="Boecher M."/>
            <person name="Bloecker H."/>
            <person name="Bauersachs S."/>
            <person name="Blum H."/>
            <person name="Lauber J."/>
            <person name="Duesterhoeft A."/>
            <person name="Beyer A."/>
            <person name="Koehrer K."/>
            <person name="Strack N."/>
            <person name="Mewes H.-W."/>
            <person name="Ottenwaelder B."/>
            <person name="Obermaier B."/>
            <person name="Tampe J."/>
            <person name="Heubner D."/>
            <person name="Wambutt R."/>
            <person name="Korn B."/>
            <person name="Klein M."/>
            <person name="Poustka A."/>
        </authorList>
    </citation>
    <scope>NUCLEOTIDE SEQUENCE [LARGE SCALE MRNA]</scope>
    <scope>VARIANTS GLU-602 AND GLN-921</scope>
    <source>
        <tissue>Uterus</tissue>
    </source>
</reference>
<reference key="4">
    <citation type="journal article" date="2004" name="Nat. Genet.">
        <title>Complete sequencing and characterization of 21,243 full-length human cDNAs.</title>
        <authorList>
            <person name="Ota T."/>
            <person name="Suzuki Y."/>
            <person name="Nishikawa T."/>
            <person name="Otsuki T."/>
            <person name="Sugiyama T."/>
            <person name="Irie R."/>
            <person name="Wakamatsu A."/>
            <person name="Hayashi K."/>
            <person name="Sato H."/>
            <person name="Nagai K."/>
            <person name="Kimura K."/>
            <person name="Makita H."/>
            <person name="Sekine M."/>
            <person name="Obayashi M."/>
            <person name="Nishi T."/>
            <person name="Shibahara T."/>
            <person name="Tanaka T."/>
            <person name="Ishii S."/>
            <person name="Yamamoto J."/>
            <person name="Saito K."/>
            <person name="Kawai Y."/>
            <person name="Isono Y."/>
            <person name="Nakamura Y."/>
            <person name="Nagahari K."/>
            <person name="Murakami K."/>
            <person name="Yasuda T."/>
            <person name="Iwayanagi T."/>
            <person name="Wagatsuma M."/>
            <person name="Shiratori A."/>
            <person name="Sudo H."/>
            <person name="Hosoiri T."/>
            <person name="Kaku Y."/>
            <person name="Kodaira H."/>
            <person name="Kondo H."/>
            <person name="Sugawara M."/>
            <person name="Takahashi M."/>
            <person name="Kanda K."/>
            <person name="Yokoi T."/>
            <person name="Furuya T."/>
            <person name="Kikkawa E."/>
            <person name="Omura Y."/>
            <person name="Abe K."/>
            <person name="Kamihara K."/>
            <person name="Katsuta N."/>
            <person name="Sato K."/>
            <person name="Tanikawa M."/>
            <person name="Yamazaki M."/>
            <person name="Ninomiya K."/>
            <person name="Ishibashi T."/>
            <person name="Yamashita H."/>
            <person name="Murakawa K."/>
            <person name="Fujimori K."/>
            <person name="Tanai H."/>
            <person name="Kimata M."/>
            <person name="Watanabe M."/>
            <person name="Hiraoka S."/>
            <person name="Chiba Y."/>
            <person name="Ishida S."/>
            <person name="Ono Y."/>
            <person name="Takiguchi S."/>
            <person name="Watanabe S."/>
            <person name="Yosida M."/>
            <person name="Hotuta T."/>
            <person name="Kusano J."/>
            <person name="Kanehori K."/>
            <person name="Takahashi-Fujii A."/>
            <person name="Hara H."/>
            <person name="Tanase T.-O."/>
            <person name="Nomura Y."/>
            <person name="Togiya S."/>
            <person name="Komai F."/>
            <person name="Hara R."/>
            <person name="Takeuchi K."/>
            <person name="Arita M."/>
            <person name="Imose N."/>
            <person name="Musashino K."/>
            <person name="Yuuki H."/>
            <person name="Oshima A."/>
            <person name="Sasaki N."/>
            <person name="Aotsuka S."/>
            <person name="Yoshikawa Y."/>
            <person name="Matsunawa H."/>
            <person name="Ichihara T."/>
            <person name="Shiohata N."/>
            <person name="Sano S."/>
            <person name="Moriya S."/>
            <person name="Momiyama H."/>
            <person name="Satoh N."/>
            <person name="Takami S."/>
            <person name="Terashima Y."/>
            <person name="Suzuki O."/>
            <person name="Nakagawa S."/>
            <person name="Senoh A."/>
            <person name="Mizoguchi H."/>
            <person name="Goto Y."/>
            <person name="Shimizu F."/>
            <person name="Wakebe H."/>
            <person name="Hishigaki H."/>
            <person name="Watanabe T."/>
            <person name="Sugiyama A."/>
            <person name="Takemoto M."/>
            <person name="Kawakami B."/>
            <person name="Yamazaki M."/>
            <person name="Watanabe K."/>
            <person name="Kumagai A."/>
            <person name="Itakura S."/>
            <person name="Fukuzumi Y."/>
            <person name="Fujimori Y."/>
            <person name="Komiyama M."/>
            <person name="Tashiro H."/>
            <person name="Tanigami A."/>
            <person name="Fujiwara T."/>
            <person name="Ono T."/>
            <person name="Yamada K."/>
            <person name="Fujii Y."/>
            <person name="Ozaki K."/>
            <person name="Hirao M."/>
            <person name="Ohmori Y."/>
            <person name="Kawabata A."/>
            <person name="Hikiji T."/>
            <person name="Kobatake N."/>
            <person name="Inagaki H."/>
            <person name="Ikema Y."/>
            <person name="Okamoto S."/>
            <person name="Okitani R."/>
            <person name="Kawakami T."/>
            <person name="Noguchi S."/>
            <person name="Itoh T."/>
            <person name="Shigeta K."/>
            <person name="Senba T."/>
            <person name="Matsumura K."/>
            <person name="Nakajima Y."/>
            <person name="Mizuno T."/>
            <person name="Morinaga M."/>
            <person name="Sasaki M."/>
            <person name="Togashi T."/>
            <person name="Oyama M."/>
            <person name="Hata H."/>
            <person name="Watanabe M."/>
            <person name="Komatsu T."/>
            <person name="Mizushima-Sugano J."/>
            <person name="Satoh T."/>
            <person name="Shirai Y."/>
            <person name="Takahashi Y."/>
            <person name="Nakagawa K."/>
            <person name="Okumura K."/>
            <person name="Nagase T."/>
            <person name="Nomura N."/>
            <person name="Kikuchi H."/>
            <person name="Masuho Y."/>
            <person name="Yamashita R."/>
            <person name="Nakai K."/>
            <person name="Yada T."/>
            <person name="Nakamura Y."/>
            <person name="Ohara O."/>
            <person name="Isogai T."/>
            <person name="Sugano S."/>
        </authorList>
    </citation>
    <scope>NUCLEOTIDE SEQUENCE [LARGE SCALE MRNA]</scope>
    <scope>VARIANT GLU-602</scope>
    <source>
        <tissue>Brain</tissue>
        <tissue>Testis</tissue>
    </source>
</reference>
<reference key="5">
    <citation type="journal article" date="2006" name="Nature">
        <title>The finished DNA sequence of human chromosome 12.</title>
        <authorList>
            <person name="Scherer S.E."/>
            <person name="Muzny D.M."/>
            <person name="Buhay C.J."/>
            <person name="Chen R."/>
            <person name="Cree A."/>
            <person name="Ding Y."/>
            <person name="Dugan-Rocha S."/>
            <person name="Gill R."/>
            <person name="Gunaratne P."/>
            <person name="Harris R.A."/>
            <person name="Hawes A.C."/>
            <person name="Hernandez J."/>
            <person name="Hodgson A.V."/>
            <person name="Hume J."/>
            <person name="Jackson A."/>
            <person name="Khan Z.M."/>
            <person name="Kovar-Smith C."/>
            <person name="Lewis L.R."/>
            <person name="Lozado R.J."/>
            <person name="Metzker M.L."/>
            <person name="Milosavljevic A."/>
            <person name="Miner G.R."/>
            <person name="Montgomery K.T."/>
            <person name="Morgan M.B."/>
            <person name="Nazareth L.V."/>
            <person name="Scott G."/>
            <person name="Sodergren E."/>
            <person name="Song X.-Z."/>
            <person name="Steffen D."/>
            <person name="Lovering R.C."/>
            <person name="Wheeler D.A."/>
            <person name="Worley K.C."/>
            <person name="Yuan Y."/>
            <person name="Zhang Z."/>
            <person name="Adams C.Q."/>
            <person name="Ansari-Lari M.A."/>
            <person name="Ayele M."/>
            <person name="Brown M.J."/>
            <person name="Chen G."/>
            <person name="Chen Z."/>
            <person name="Clerc-Blankenburg K.P."/>
            <person name="Davis C."/>
            <person name="Delgado O."/>
            <person name="Dinh H.H."/>
            <person name="Draper H."/>
            <person name="Gonzalez-Garay M.L."/>
            <person name="Havlak P."/>
            <person name="Jackson L.R."/>
            <person name="Jacob L.S."/>
            <person name="Kelly S.H."/>
            <person name="Li L."/>
            <person name="Li Z."/>
            <person name="Liu J."/>
            <person name="Liu W."/>
            <person name="Lu J."/>
            <person name="Maheshwari M."/>
            <person name="Nguyen B.-V."/>
            <person name="Okwuonu G.O."/>
            <person name="Pasternak S."/>
            <person name="Perez L.M."/>
            <person name="Plopper F.J.H."/>
            <person name="Santibanez J."/>
            <person name="Shen H."/>
            <person name="Tabor P.E."/>
            <person name="Verduzco D."/>
            <person name="Waldron L."/>
            <person name="Wang Q."/>
            <person name="Williams G.A."/>
            <person name="Zhang J."/>
            <person name="Zhou J."/>
            <person name="Allen C.C."/>
            <person name="Amin A.G."/>
            <person name="Anyalebechi V."/>
            <person name="Bailey M."/>
            <person name="Barbaria J.A."/>
            <person name="Bimage K.E."/>
            <person name="Bryant N.P."/>
            <person name="Burch P.E."/>
            <person name="Burkett C.E."/>
            <person name="Burrell K.L."/>
            <person name="Calderon E."/>
            <person name="Cardenas V."/>
            <person name="Carter K."/>
            <person name="Casias K."/>
            <person name="Cavazos I."/>
            <person name="Cavazos S.R."/>
            <person name="Ceasar H."/>
            <person name="Chacko J."/>
            <person name="Chan S.N."/>
            <person name="Chavez D."/>
            <person name="Christopoulos C."/>
            <person name="Chu J."/>
            <person name="Cockrell R."/>
            <person name="Cox C.D."/>
            <person name="Dang M."/>
            <person name="Dathorne S.R."/>
            <person name="David R."/>
            <person name="Davis C.M."/>
            <person name="Davy-Carroll L."/>
            <person name="Deshazo D.R."/>
            <person name="Donlin J.E."/>
            <person name="D'Souza L."/>
            <person name="Eaves K.A."/>
            <person name="Egan A."/>
            <person name="Emery-Cohen A.J."/>
            <person name="Escotto M."/>
            <person name="Flagg N."/>
            <person name="Forbes L.D."/>
            <person name="Gabisi A.M."/>
            <person name="Garza M."/>
            <person name="Hamilton C."/>
            <person name="Henderson N."/>
            <person name="Hernandez O."/>
            <person name="Hines S."/>
            <person name="Hogues M.E."/>
            <person name="Huang M."/>
            <person name="Idlebird D.G."/>
            <person name="Johnson R."/>
            <person name="Jolivet A."/>
            <person name="Jones S."/>
            <person name="Kagan R."/>
            <person name="King L.M."/>
            <person name="Leal B."/>
            <person name="Lebow H."/>
            <person name="Lee S."/>
            <person name="LeVan J.M."/>
            <person name="Lewis L.C."/>
            <person name="London P."/>
            <person name="Lorensuhewa L.M."/>
            <person name="Loulseged H."/>
            <person name="Lovett D.A."/>
            <person name="Lucier A."/>
            <person name="Lucier R.L."/>
            <person name="Ma J."/>
            <person name="Madu R.C."/>
            <person name="Mapua P."/>
            <person name="Martindale A.D."/>
            <person name="Martinez E."/>
            <person name="Massey E."/>
            <person name="Mawhiney S."/>
            <person name="Meador M.G."/>
            <person name="Mendez S."/>
            <person name="Mercado C."/>
            <person name="Mercado I.C."/>
            <person name="Merritt C.E."/>
            <person name="Miner Z.L."/>
            <person name="Minja E."/>
            <person name="Mitchell T."/>
            <person name="Mohabbat F."/>
            <person name="Mohabbat K."/>
            <person name="Montgomery B."/>
            <person name="Moore N."/>
            <person name="Morris S."/>
            <person name="Munidasa M."/>
            <person name="Ngo R.N."/>
            <person name="Nguyen N.B."/>
            <person name="Nickerson E."/>
            <person name="Nwaokelemeh O.O."/>
            <person name="Nwokenkwo S."/>
            <person name="Obregon M."/>
            <person name="Oguh M."/>
            <person name="Oragunye N."/>
            <person name="Oviedo R.J."/>
            <person name="Parish B.J."/>
            <person name="Parker D.N."/>
            <person name="Parrish J."/>
            <person name="Parks K.L."/>
            <person name="Paul H.A."/>
            <person name="Payton B.A."/>
            <person name="Perez A."/>
            <person name="Perrin W."/>
            <person name="Pickens A."/>
            <person name="Primus E.L."/>
            <person name="Pu L.-L."/>
            <person name="Puazo M."/>
            <person name="Quiles M.M."/>
            <person name="Quiroz J.B."/>
            <person name="Rabata D."/>
            <person name="Reeves K."/>
            <person name="Ruiz S.J."/>
            <person name="Shao H."/>
            <person name="Sisson I."/>
            <person name="Sonaike T."/>
            <person name="Sorelle R.P."/>
            <person name="Sutton A.E."/>
            <person name="Svatek A.F."/>
            <person name="Svetz L.A."/>
            <person name="Tamerisa K.S."/>
            <person name="Taylor T.R."/>
            <person name="Teague B."/>
            <person name="Thomas N."/>
            <person name="Thorn R.D."/>
            <person name="Trejos Z.Y."/>
            <person name="Trevino B.K."/>
            <person name="Ukegbu O.N."/>
            <person name="Urban J.B."/>
            <person name="Vasquez L.I."/>
            <person name="Vera V.A."/>
            <person name="Villasana D.M."/>
            <person name="Wang L."/>
            <person name="Ward-Moore S."/>
            <person name="Warren J.T."/>
            <person name="Wei X."/>
            <person name="White F."/>
            <person name="Williamson A.L."/>
            <person name="Wleczyk R."/>
            <person name="Wooden H.S."/>
            <person name="Wooden S.H."/>
            <person name="Yen J."/>
            <person name="Yoon L."/>
            <person name="Yoon V."/>
            <person name="Zorrilla S.E."/>
            <person name="Nelson D."/>
            <person name="Kucherlapati R."/>
            <person name="Weinstock G."/>
            <person name="Gibbs R.A."/>
        </authorList>
    </citation>
    <scope>NUCLEOTIDE SEQUENCE [LARGE SCALE GENOMIC DNA]</scope>
</reference>
<reference key="6">
    <citation type="journal article" date="2004" name="Genome Res.">
        <title>The status, quality, and expansion of the NIH full-length cDNA project: the Mammalian Gene Collection (MGC).</title>
        <authorList>
            <consortium name="The MGC Project Team"/>
        </authorList>
    </citation>
    <scope>NUCLEOTIDE SEQUENCE [LARGE SCALE MRNA]</scope>
    <scope>VARIANTS GLU-602; ARG-609; THR-623 AND ALA-665</scope>
    <source>
        <tissue>Lymph</tissue>
    </source>
</reference>
<reference key="7">
    <citation type="journal article" date="2002" name="Mol. Biol. Cell">
        <title>Functional proteomic analysis of human nucleolus.</title>
        <authorList>
            <person name="Scherl A."/>
            <person name="Coute Y."/>
            <person name="Deon C."/>
            <person name="Calle A."/>
            <person name="Kindbeiter K."/>
            <person name="Sanchez J.-C."/>
            <person name="Greco A."/>
            <person name="Hochstrasser D.F."/>
            <person name="Diaz J.-J."/>
        </authorList>
    </citation>
    <scope>SUBCELLULAR LOCATION [LARGE SCALE ANALYSIS]</scope>
    <source>
        <tissue>Cervix carcinoma</tissue>
    </source>
</reference>
<reference key="8">
    <citation type="journal article" date="2005" name="Gene Expr. Patterns">
        <title>Rbm19 is a nucleolar protein expressed in crypt/progenitor cells of the intestinal epithelium.</title>
        <authorList>
            <person name="Lorenzen J.A."/>
            <person name="Bonacci B.B."/>
            <person name="Palmer R.E."/>
            <person name="Wells C."/>
            <person name="Zhang J."/>
            <person name="Haber D.A."/>
            <person name="Goldstein A.M."/>
            <person name="Mayer A.N."/>
        </authorList>
    </citation>
    <scope>SUBCELLULAR LOCATION</scope>
    <scope>TISSUE SPECIFICITY</scope>
</reference>
<reference key="9">
    <citation type="journal article" date="2006" name="Cell">
        <title>Global, in vivo, and site-specific phosphorylation dynamics in signaling networks.</title>
        <authorList>
            <person name="Olsen J.V."/>
            <person name="Blagoev B."/>
            <person name="Gnad F."/>
            <person name="Macek B."/>
            <person name="Kumar C."/>
            <person name="Mortensen P."/>
            <person name="Mann M."/>
        </authorList>
    </citation>
    <scope>IDENTIFICATION BY MASS SPECTROMETRY [LARGE SCALE ANALYSIS]</scope>
    <source>
        <tissue>Cervix carcinoma</tissue>
    </source>
</reference>
<reference key="10">
    <citation type="journal article" date="2008" name="Proc. Natl. Acad. Sci. U.S.A.">
        <title>A quantitative atlas of mitotic phosphorylation.</title>
        <authorList>
            <person name="Dephoure N."/>
            <person name="Zhou C."/>
            <person name="Villen J."/>
            <person name="Beausoleil S.A."/>
            <person name="Bakalarski C.E."/>
            <person name="Elledge S.J."/>
            <person name="Gygi S.P."/>
        </authorList>
    </citation>
    <scope>PHOSPHORYLATION [LARGE SCALE ANALYSIS] AT SER-174; SER-176 AND SER-180</scope>
    <scope>IDENTIFICATION BY MASS SPECTROMETRY [LARGE SCALE ANALYSIS]</scope>
    <source>
        <tissue>Cervix carcinoma</tissue>
    </source>
</reference>
<reference key="11">
    <citation type="journal article" date="2010" name="Sci. Signal.">
        <title>Quantitative phosphoproteomics reveals widespread full phosphorylation site occupancy during mitosis.</title>
        <authorList>
            <person name="Olsen J.V."/>
            <person name="Vermeulen M."/>
            <person name="Santamaria A."/>
            <person name="Kumar C."/>
            <person name="Miller M.L."/>
            <person name="Jensen L.J."/>
            <person name="Gnad F."/>
            <person name="Cox J."/>
            <person name="Jensen T.S."/>
            <person name="Nigg E.A."/>
            <person name="Brunak S."/>
            <person name="Mann M."/>
        </authorList>
    </citation>
    <scope>PHOSPHORYLATION [LARGE SCALE ANALYSIS] AT SER-949 AND SER-951</scope>
    <scope>IDENTIFICATION BY MASS SPECTROMETRY [LARGE SCALE ANALYSIS]</scope>
    <source>
        <tissue>Cervix carcinoma</tissue>
    </source>
</reference>
<reference key="12">
    <citation type="journal article" date="2011" name="Sci. Signal.">
        <title>System-wide temporal characterization of the proteome and phosphoproteome of human embryonic stem cell differentiation.</title>
        <authorList>
            <person name="Rigbolt K.T."/>
            <person name="Prokhorova T.A."/>
            <person name="Akimov V."/>
            <person name="Henningsen J."/>
            <person name="Johansen P.T."/>
            <person name="Kratchmarova I."/>
            <person name="Kassem M."/>
            <person name="Mann M."/>
            <person name="Olsen J.V."/>
            <person name="Blagoev B."/>
        </authorList>
    </citation>
    <scope>PHOSPHORYLATION [LARGE SCALE ANALYSIS] AT SER-174; SER-176; SER-180; SER-936; SER-949 AND SER-951</scope>
    <scope>IDENTIFICATION BY MASS SPECTROMETRY [LARGE SCALE ANALYSIS]</scope>
</reference>
<reference key="13">
    <citation type="journal article" date="2017" name="Nat. Struct. Mol. Biol.">
        <title>Site-specific mapping of the human SUMO proteome reveals co-modification with phosphorylation.</title>
        <authorList>
            <person name="Hendriks I.A."/>
            <person name="Lyon D."/>
            <person name="Young C."/>
            <person name="Jensen L.J."/>
            <person name="Vertegaal A.C."/>
            <person name="Nielsen M.L."/>
        </authorList>
    </citation>
    <scope>SUMOYLATION [LARGE SCALE ANALYSIS] AT LYS-481</scope>
    <scope>IDENTIFICATION BY MASS SPECTROMETRY [LARGE SCALE ANALYSIS]</scope>
</reference>
<reference key="14">
    <citation type="submission" date="2006-09" db="PDB data bank">
        <title>Solution structure of the second RNA recognition motif in RNA-binding protein 19.</title>
        <authorList>
            <consortium name="RIKEN structural genomics initiative (RSGI)"/>
        </authorList>
    </citation>
    <scope>STRUCTURE BY NMR OF 291-373</scope>
</reference>
<evidence type="ECO:0000250" key="1"/>
<evidence type="ECO:0000255" key="2">
    <source>
        <dbReference type="PROSITE-ProRule" id="PRU00176"/>
    </source>
</evidence>
<evidence type="ECO:0000256" key="3">
    <source>
        <dbReference type="SAM" id="MobiDB-lite"/>
    </source>
</evidence>
<evidence type="ECO:0000269" key="4">
    <source>
    </source>
</evidence>
<evidence type="ECO:0000269" key="5">
    <source>
    </source>
</evidence>
<evidence type="ECO:0000269" key="6">
    <source>
    </source>
</evidence>
<evidence type="ECO:0000269" key="7">
    <source>
    </source>
</evidence>
<evidence type="ECO:0000269" key="8">
    <source>
    </source>
</evidence>
<evidence type="ECO:0000269" key="9">
    <source>
    </source>
</evidence>
<evidence type="ECO:0000305" key="10"/>
<evidence type="ECO:0007744" key="11">
    <source>
    </source>
</evidence>
<evidence type="ECO:0007744" key="12">
    <source>
    </source>
</evidence>
<evidence type="ECO:0007744" key="13">
    <source>
    </source>
</evidence>
<evidence type="ECO:0007744" key="14">
    <source>
    </source>
</evidence>
<evidence type="ECO:0007829" key="15">
    <source>
        <dbReference type="PDB" id="2DGW"/>
    </source>
</evidence>
<keyword id="KW-0002">3D-structure</keyword>
<keyword id="KW-0158">Chromosome</keyword>
<keyword id="KW-0963">Cytoplasm</keyword>
<keyword id="KW-0217">Developmental protein</keyword>
<keyword id="KW-1017">Isopeptide bond</keyword>
<keyword id="KW-0539">Nucleus</keyword>
<keyword id="KW-0597">Phosphoprotein</keyword>
<keyword id="KW-1267">Proteomics identification</keyword>
<keyword id="KW-1185">Reference proteome</keyword>
<keyword id="KW-0677">Repeat</keyword>
<keyword id="KW-0694">RNA-binding</keyword>
<keyword id="KW-0832">Ubl conjugation</keyword>
<gene>
    <name type="primary">RBM19</name>
    <name type="synonym">KIAA0682</name>
</gene>